<dbReference type="EMBL" id="BC114057">
    <property type="protein sequence ID" value="AAI14058.1"/>
    <property type="molecule type" value="mRNA"/>
</dbReference>
<dbReference type="RefSeq" id="NP_001039395.1">
    <property type="nucleotide sequence ID" value="NM_001045930.2"/>
</dbReference>
<dbReference type="SMR" id="Q29RR6"/>
<dbReference type="FunCoup" id="Q29RR6">
    <property type="interactions" value="14"/>
</dbReference>
<dbReference type="STRING" id="9913.ENSBTAP00000074553"/>
<dbReference type="GlyCosmos" id="Q29RR6">
    <property type="glycosylation" value="3 sites, No reported glycans"/>
</dbReference>
<dbReference type="GlyGen" id="Q29RR6">
    <property type="glycosylation" value="3 sites"/>
</dbReference>
<dbReference type="PaxDb" id="9913-ENSBTAP00000010335"/>
<dbReference type="GeneID" id="505937"/>
<dbReference type="KEGG" id="bta:505937"/>
<dbReference type="CTD" id="340547"/>
<dbReference type="eggNOG" id="ENOG502QU0R">
    <property type="taxonomic scope" value="Eukaryota"/>
</dbReference>
<dbReference type="InParanoid" id="Q29RR6"/>
<dbReference type="OrthoDB" id="190835at2759"/>
<dbReference type="Proteomes" id="UP000009136">
    <property type="component" value="Unplaced"/>
</dbReference>
<dbReference type="GO" id="GO:0016323">
    <property type="term" value="C:basolateral plasma membrane"/>
    <property type="evidence" value="ECO:0000318"/>
    <property type="project" value="GO_Central"/>
</dbReference>
<dbReference type="GO" id="GO:0003382">
    <property type="term" value="P:epithelial cell morphogenesis"/>
    <property type="evidence" value="ECO:0007669"/>
    <property type="project" value="InterPro"/>
</dbReference>
<dbReference type="GO" id="GO:0030277">
    <property type="term" value="P:maintenance of gastrointestinal epithelium"/>
    <property type="evidence" value="ECO:0000318"/>
    <property type="project" value="GO_Central"/>
</dbReference>
<dbReference type="FunFam" id="2.60.40.10:FF:000095">
    <property type="entry name" value="immunoglobulin superfamily member 11 isoform X1"/>
    <property type="match status" value="1"/>
</dbReference>
<dbReference type="FunFam" id="2.60.40.10:FF:000931">
    <property type="entry name" value="V-set and immunoglobulin domain containing 1"/>
    <property type="match status" value="1"/>
</dbReference>
<dbReference type="Gene3D" id="2.60.40.10">
    <property type="entry name" value="Immunoglobulins"/>
    <property type="match status" value="2"/>
</dbReference>
<dbReference type="InterPro" id="IPR007110">
    <property type="entry name" value="Ig-like_dom"/>
</dbReference>
<dbReference type="InterPro" id="IPR036179">
    <property type="entry name" value="Ig-like_dom_sf"/>
</dbReference>
<dbReference type="InterPro" id="IPR013783">
    <property type="entry name" value="Ig-like_fold"/>
</dbReference>
<dbReference type="InterPro" id="IPR003599">
    <property type="entry name" value="Ig_sub"/>
</dbReference>
<dbReference type="InterPro" id="IPR003598">
    <property type="entry name" value="Ig_sub2"/>
</dbReference>
<dbReference type="InterPro" id="IPR013106">
    <property type="entry name" value="Ig_V-set"/>
</dbReference>
<dbReference type="InterPro" id="IPR029861">
    <property type="entry name" value="VSIG1"/>
</dbReference>
<dbReference type="PANTHER" id="PTHR44974">
    <property type="entry name" value="V-SET AND IMMUNOGLOBULIN DOMAIN-CONTAINING PROTEIN 1"/>
    <property type="match status" value="1"/>
</dbReference>
<dbReference type="PANTHER" id="PTHR44974:SF1">
    <property type="entry name" value="V-SET AND IMMUNOGLOBULIN DOMAIN-CONTAINING PROTEIN 1"/>
    <property type="match status" value="1"/>
</dbReference>
<dbReference type="Pfam" id="PF13927">
    <property type="entry name" value="Ig_3"/>
    <property type="match status" value="1"/>
</dbReference>
<dbReference type="Pfam" id="PF07686">
    <property type="entry name" value="V-set"/>
    <property type="match status" value="1"/>
</dbReference>
<dbReference type="SMART" id="SM00409">
    <property type="entry name" value="IG"/>
    <property type="match status" value="2"/>
</dbReference>
<dbReference type="SMART" id="SM00408">
    <property type="entry name" value="IGc2"/>
    <property type="match status" value="2"/>
</dbReference>
<dbReference type="SMART" id="SM00406">
    <property type="entry name" value="IGv"/>
    <property type="match status" value="1"/>
</dbReference>
<dbReference type="SUPFAM" id="SSF48726">
    <property type="entry name" value="Immunoglobulin"/>
    <property type="match status" value="2"/>
</dbReference>
<dbReference type="PROSITE" id="PS50835">
    <property type="entry name" value="IG_LIKE"/>
    <property type="match status" value="2"/>
</dbReference>
<reference key="1">
    <citation type="submission" date="2006-02" db="EMBL/GenBank/DDBJ databases">
        <authorList>
            <consortium name="NIH - Mammalian Gene Collection (MGC) project"/>
        </authorList>
    </citation>
    <scope>NUCLEOTIDE SEQUENCE [LARGE SCALE MRNA]</scope>
    <source>
        <strain>Hereford</strain>
        <tissue>Testis</tissue>
    </source>
</reference>
<evidence type="ECO:0000255" key="1"/>
<evidence type="ECO:0000255" key="2">
    <source>
        <dbReference type="PROSITE-ProRule" id="PRU00114"/>
    </source>
</evidence>
<evidence type="ECO:0000256" key="3">
    <source>
        <dbReference type="SAM" id="MobiDB-lite"/>
    </source>
</evidence>
<evidence type="ECO:0000305" key="4"/>
<name>VSIG1_BOVIN</name>
<keyword id="KW-1015">Disulfide bond</keyword>
<keyword id="KW-0325">Glycoprotein</keyword>
<keyword id="KW-0393">Immunoglobulin domain</keyword>
<keyword id="KW-0472">Membrane</keyword>
<keyword id="KW-1185">Reference proteome</keyword>
<keyword id="KW-0677">Repeat</keyword>
<keyword id="KW-0732">Signal</keyword>
<keyword id="KW-0812">Transmembrane</keyword>
<keyword id="KW-1133">Transmembrane helix</keyword>
<protein>
    <recommendedName>
        <fullName>V-set and immunoglobulin domain-containing protein 1</fullName>
    </recommendedName>
</protein>
<comment type="subcellular location">
    <subcellularLocation>
        <location evidence="4">Membrane</location>
        <topology evidence="4">Single-pass type I membrane protein</topology>
    </subcellularLocation>
</comment>
<organism>
    <name type="scientific">Bos taurus</name>
    <name type="common">Bovine</name>
    <dbReference type="NCBI Taxonomy" id="9913"/>
    <lineage>
        <taxon>Eukaryota</taxon>
        <taxon>Metazoa</taxon>
        <taxon>Chordata</taxon>
        <taxon>Craniata</taxon>
        <taxon>Vertebrata</taxon>
        <taxon>Euteleostomi</taxon>
        <taxon>Mammalia</taxon>
        <taxon>Eutheria</taxon>
        <taxon>Laurasiatheria</taxon>
        <taxon>Artiodactyla</taxon>
        <taxon>Ruminantia</taxon>
        <taxon>Pecora</taxon>
        <taxon>Bovidae</taxon>
        <taxon>Bovinae</taxon>
        <taxon>Bos</taxon>
    </lineage>
</organism>
<proteinExistence type="evidence at transcript level"/>
<feature type="signal peptide" evidence="1">
    <location>
        <begin position="1"/>
        <end position="21"/>
    </location>
</feature>
<feature type="chain" id="PRO_0000313572" description="V-set and immunoglobulin domain-containing protein 1">
    <location>
        <begin position="22"/>
        <end position="382"/>
    </location>
</feature>
<feature type="topological domain" description="Extracellular" evidence="1">
    <location>
        <begin position="22"/>
        <end position="234"/>
    </location>
</feature>
<feature type="transmembrane region" description="Helical" evidence="1">
    <location>
        <begin position="235"/>
        <end position="255"/>
    </location>
</feature>
<feature type="topological domain" description="Cytoplasmic" evidence="1">
    <location>
        <begin position="256"/>
        <end position="382"/>
    </location>
</feature>
<feature type="domain" description="Ig-like V-type">
    <location>
        <begin position="22"/>
        <end position="133"/>
    </location>
</feature>
<feature type="domain" description="Ig-like C2-type">
    <location>
        <begin position="140"/>
        <end position="227"/>
    </location>
</feature>
<feature type="region of interest" description="Disordered" evidence="3">
    <location>
        <begin position="266"/>
        <end position="382"/>
    </location>
</feature>
<feature type="compositionally biased region" description="Polar residues" evidence="3">
    <location>
        <begin position="273"/>
        <end position="285"/>
    </location>
</feature>
<feature type="compositionally biased region" description="Basic and acidic residues" evidence="3">
    <location>
        <begin position="286"/>
        <end position="298"/>
    </location>
</feature>
<feature type="compositionally biased region" description="Pro residues" evidence="3">
    <location>
        <begin position="327"/>
        <end position="341"/>
    </location>
</feature>
<feature type="glycosylation site" description="N-linked (GlcNAc...) asparagine" evidence="1">
    <location>
        <position position="32"/>
    </location>
</feature>
<feature type="glycosylation site" description="N-linked (GlcNAc...) asparagine" evidence="1">
    <location>
        <position position="200"/>
    </location>
</feature>
<feature type="glycosylation site" description="N-linked (GlcNAc...) asparagine" evidence="1">
    <location>
        <position position="219"/>
    </location>
</feature>
<feature type="disulfide bond" evidence="2">
    <location>
        <begin position="43"/>
        <end position="116"/>
    </location>
</feature>
<feature type="disulfide bond" evidence="2">
    <location>
        <begin position="161"/>
        <end position="211"/>
    </location>
</feature>
<gene>
    <name type="primary">VSIG1</name>
</gene>
<accession>Q29RR6</accession>
<sequence>MGLTFWKVFLILNCLAGQVNGVQVTIPDSFVNVTVGSDVTLICTYATTVASLNKLSIQWTFFHKEASQPVSIYYSEGGQATAIGKFKDRIVGSNTSGNASITISHMQPEDSGIYICDVNNPTDFFGKNQGTISVSVLVKPSKPFCSIQGIAETGHPISLTCLSVLGTPSPVYYWYKLEGRNIVPVKENFNPATGILFIGNLTTFEQGYYQCTAINILGNSSCEIDLTTPYPGIGIIVGAFVGTLIGVIIIISVVWFVRRKVKAKGKERKRNSKTTTELEPMTKINQRTEGETMPREDAIQLEATLPSSTHETEPNATLGPDHEPIPEPEPALQPTVEPPSGPELVPMSELEIQLEPEPAPQQEPEPLIVDEPFCDEEKVIKP</sequence>